<reference key="1">
    <citation type="submission" date="2005-08" db="EMBL/GenBank/DDBJ databases">
        <authorList>
            <consortium name="NIH - Mammalian Gene Collection (MGC) project"/>
        </authorList>
    </citation>
    <scope>NUCLEOTIDE SEQUENCE [LARGE SCALE MRNA]</scope>
    <source>
        <strain>Crossbred X Angus</strain>
        <tissue>Ileum</tissue>
    </source>
</reference>
<dbReference type="EMBL" id="BC103367">
    <property type="protein sequence ID" value="AAI03368.1"/>
    <property type="molecule type" value="mRNA"/>
</dbReference>
<dbReference type="RefSeq" id="NP_001030412.1">
    <property type="nucleotide sequence ID" value="NM_001035335.2"/>
</dbReference>
<dbReference type="FunCoup" id="Q3SYV3">
    <property type="interactions" value="2872"/>
</dbReference>
<dbReference type="STRING" id="9913.ENSBTAP00000019736"/>
<dbReference type="PaxDb" id="9913-ENSBTAP00000019736"/>
<dbReference type="GeneID" id="520335"/>
<dbReference type="KEGG" id="bta:520335"/>
<dbReference type="CTD" id="5018"/>
<dbReference type="VEuPathDB" id="HostDB:ENSBTAG00000014820"/>
<dbReference type="eggNOG" id="KOG1239">
    <property type="taxonomic scope" value="Eukaryota"/>
</dbReference>
<dbReference type="HOGENOM" id="CLU_029282_3_1_1"/>
<dbReference type="InParanoid" id="Q3SYV3"/>
<dbReference type="OMA" id="GWKNAQT"/>
<dbReference type="OrthoDB" id="2148490at2759"/>
<dbReference type="TreeFam" id="TF354324"/>
<dbReference type="Reactome" id="R-BTA-5389840">
    <property type="pathway name" value="Mitochondrial translation elongation"/>
</dbReference>
<dbReference type="Reactome" id="R-BTA-5419276">
    <property type="pathway name" value="Mitochondrial translation termination"/>
</dbReference>
<dbReference type="Proteomes" id="UP000009136">
    <property type="component" value="Chromosome 10"/>
</dbReference>
<dbReference type="Bgee" id="ENSBTAG00000014820">
    <property type="expression patterns" value="Expressed in corpus luteum and 106 other cell types or tissues"/>
</dbReference>
<dbReference type="GO" id="GO:0005743">
    <property type="term" value="C:mitochondrial inner membrane"/>
    <property type="evidence" value="ECO:0000250"/>
    <property type="project" value="UniProtKB"/>
</dbReference>
<dbReference type="GO" id="GO:0031966">
    <property type="term" value="C:mitochondrial membrane"/>
    <property type="evidence" value="ECO:0000250"/>
    <property type="project" value="UniProtKB"/>
</dbReference>
<dbReference type="GO" id="GO:0032977">
    <property type="term" value="F:membrane insertase activity"/>
    <property type="evidence" value="ECO:0000250"/>
    <property type="project" value="UniProtKB"/>
</dbReference>
<dbReference type="GO" id="GO:0097177">
    <property type="term" value="F:mitochondrial ribosome binding"/>
    <property type="evidence" value="ECO:0000250"/>
    <property type="project" value="UniProtKB"/>
</dbReference>
<dbReference type="GO" id="GO:0042803">
    <property type="term" value="F:protein homodimerization activity"/>
    <property type="evidence" value="ECO:0000250"/>
    <property type="project" value="UniProtKB"/>
</dbReference>
<dbReference type="GO" id="GO:0141164">
    <property type="term" value="P:mitochondrial protein quality control"/>
    <property type="evidence" value="ECO:0000250"/>
    <property type="project" value="UniProtKB"/>
</dbReference>
<dbReference type="GO" id="GO:0032981">
    <property type="term" value="P:mitochondrial respiratory chain complex I assembly"/>
    <property type="evidence" value="ECO:0000250"/>
    <property type="project" value="UniProtKB"/>
</dbReference>
<dbReference type="GO" id="GO:0032979">
    <property type="term" value="P:protein insertion into mitochondrial inner membrane from matrix"/>
    <property type="evidence" value="ECO:0000250"/>
    <property type="project" value="UniProtKB"/>
</dbReference>
<dbReference type="GO" id="GO:0051262">
    <property type="term" value="P:protein tetramerization"/>
    <property type="evidence" value="ECO:0000250"/>
    <property type="project" value="UniProtKB"/>
</dbReference>
<dbReference type="CDD" id="cd20069">
    <property type="entry name" value="5TM_Oxa1-like"/>
    <property type="match status" value="1"/>
</dbReference>
<dbReference type="InterPro" id="IPR001708">
    <property type="entry name" value="YidC/ALB3/OXA1/COX18"/>
</dbReference>
<dbReference type="InterPro" id="IPR028055">
    <property type="entry name" value="YidC/Oxa/ALB_C"/>
</dbReference>
<dbReference type="NCBIfam" id="TIGR03592">
    <property type="entry name" value="yidC_oxa1_cterm"/>
    <property type="match status" value="1"/>
</dbReference>
<dbReference type="PANTHER" id="PTHR12428:SF66">
    <property type="entry name" value="MITOCHONDRIAL INNER MEMBRANE PROTEIN OXA1L"/>
    <property type="match status" value="1"/>
</dbReference>
<dbReference type="PANTHER" id="PTHR12428">
    <property type="entry name" value="OXA1"/>
    <property type="match status" value="1"/>
</dbReference>
<dbReference type="Pfam" id="PF02096">
    <property type="entry name" value="60KD_IMP"/>
    <property type="match status" value="1"/>
</dbReference>
<keyword id="KW-0472">Membrane</keyword>
<keyword id="KW-0496">Mitochondrion</keyword>
<keyword id="KW-0999">Mitochondrion inner membrane</keyword>
<keyword id="KW-0597">Phosphoprotein</keyword>
<keyword id="KW-1185">Reference proteome</keyword>
<keyword id="KW-0809">Transit peptide</keyword>
<keyword id="KW-0812">Transmembrane</keyword>
<keyword id="KW-1133">Transmembrane helix</keyword>
<feature type="transit peptide" description="Mitochondrion" evidence="2">
    <location>
        <begin position="1"/>
        <end status="unknown"/>
    </location>
</feature>
<feature type="chain" id="PRO_0000271431" description="Mitochondrial inner membrane protein OXA1L">
    <location>
        <begin status="unknown"/>
        <end position="441"/>
    </location>
</feature>
<feature type="topological domain" description="Mitochondrial intermembrane" evidence="2">
    <location>
        <begin position="1"/>
        <end position="113"/>
    </location>
</feature>
<feature type="transmembrane region" description="Helical" evidence="2">
    <location>
        <begin position="114"/>
        <end position="134"/>
    </location>
</feature>
<feature type="topological domain" description="Mitochondrial matrix" evidence="2">
    <location>
        <begin position="135"/>
        <end position="139"/>
    </location>
</feature>
<feature type="transmembrane region" description="Helical" evidence="2">
    <location>
        <begin position="140"/>
        <end position="160"/>
    </location>
</feature>
<feature type="topological domain" description="Mitochondrial intermembrane" evidence="2">
    <location>
        <begin position="161"/>
        <end position="212"/>
    </location>
</feature>
<feature type="transmembrane region" description="Helical" evidence="2">
    <location>
        <begin position="213"/>
        <end position="233"/>
    </location>
</feature>
<feature type="topological domain" description="Mitochondrial matrix" evidence="2">
    <location>
        <begin position="234"/>
        <end position="260"/>
    </location>
</feature>
<feature type="transmembrane region" description="Helical" evidence="2">
    <location>
        <begin position="261"/>
        <end position="281"/>
    </location>
</feature>
<feature type="topological domain" description="Mitochondrial intermembrane" evidence="2">
    <location>
        <begin position="282"/>
        <end position="298"/>
    </location>
</feature>
<feature type="transmembrane region" description="Helical" evidence="2">
    <location>
        <begin position="299"/>
        <end position="319"/>
    </location>
</feature>
<feature type="topological domain" description="Mitochondrial matrix" evidence="2">
    <location>
        <begin position="320"/>
        <end position="441"/>
    </location>
</feature>
<feature type="region of interest" description="Disordered" evidence="3">
    <location>
        <begin position="405"/>
        <end position="441"/>
    </location>
</feature>
<feature type="compositionally biased region" description="Low complexity" evidence="3">
    <location>
        <begin position="418"/>
        <end position="429"/>
    </location>
</feature>
<feature type="modified residue" description="Phosphoserine" evidence="1">
    <location>
        <position position="364"/>
    </location>
</feature>
<feature type="modified residue" description="Phosphothreonine" evidence="1">
    <location>
        <position position="400"/>
    </location>
</feature>
<proteinExistence type="evidence at transcript level"/>
<gene>
    <name type="primary">OXA1L</name>
</gene>
<sequence>MALALMCGRRQLLCLLRPQRQFHSVAGPCQWPRKPLTAGLGFPADRCLGHPRYVLLMAPGPRGLSTSAVSFGEAQVPAPPVIPATPPPTAVPEVASGEAADVIQAAAEQSFAELGLGSYTPVGLIQNLLEFMHVNLGLPWWGAIAACTVLARCLVFPLIVKGQREAAKIHNHLPEIQKFSARIREAKLTGNHTEFYRASSEMTFYQKKHDIKLFRPLILPLTQAPIFISFFIALREMANLPVPSLQTGGLWWFQDLTLSDPIYVLPLVVTATMWGVLELGAETGMQSSDLQWMRNFIRLMPLAVLPITIHFPTAVFMYWLSSNMFSLGQVACLRIPAVRTVLKIPQRVVHDPDKLAPREGFLKSFKQGWKNAEMAHQLQERERRMQNHLELAARGPLRQTFAHNPLLQHGKNDPPNTPNSSSSSSSSNKAKSKQPWRDTLG</sequence>
<organism>
    <name type="scientific">Bos taurus</name>
    <name type="common">Bovine</name>
    <dbReference type="NCBI Taxonomy" id="9913"/>
    <lineage>
        <taxon>Eukaryota</taxon>
        <taxon>Metazoa</taxon>
        <taxon>Chordata</taxon>
        <taxon>Craniata</taxon>
        <taxon>Vertebrata</taxon>
        <taxon>Euteleostomi</taxon>
        <taxon>Mammalia</taxon>
        <taxon>Eutheria</taxon>
        <taxon>Laurasiatheria</taxon>
        <taxon>Artiodactyla</taxon>
        <taxon>Ruminantia</taxon>
        <taxon>Pecora</taxon>
        <taxon>Bovidae</taxon>
        <taxon>Bovinae</taxon>
        <taxon>Bos</taxon>
    </lineage>
</organism>
<evidence type="ECO:0000250" key="1">
    <source>
        <dbReference type="UniProtKB" id="Q15070"/>
    </source>
</evidence>
<evidence type="ECO:0000255" key="2"/>
<evidence type="ECO:0000256" key="3">
    <source>
        <dbReference type="SAM" id="MobiDB-lite"/>
    </source>
</evidence>
<evidence type="ECO:0000305" key="4"/>
<comment type="function">
    <text evidence="1">Mitochondrial membrane insertase that mediates the cotranslational insertion of integral membrane proteins into the mitochondrial inner membrane. Essential for the activity and assembly of cytochrome oxidase. Required for the correct biogenesis of ATP synthase and complex I in mitochondria.</text>
</comment>
<comment type="subunit">
    <text evidence="1">Monomer; predominantly monomeric at low salt concentrations. Homooligomer; predominantly homooligomeric at high salt concentrations. Associates with the mitochondrial ribosome. Associates preferentially as a dimer with the large ribosomal subunit 39S of the mitochondrial ribosome. Interacts with OXA1L; promoting cotranslational quality control in mitochondria.</text>
</comment>
<comment type="subcellular location">
    <subcellularLocation>
        <location evidence="1">Mitochondrion inner membrane</location>
        <topology evidence="1">Multi-pass membrane protein</topology>
    </subcellularLocation>
</comment>
<comment type="similarity">
    <text evidence="4">Belongs to the OXA1/ALB3/YidC family.</text>
</comment>
<accession>Q3SYV3</accession>
<name>OXA1L_BOVIN</name>
<protein>
    <recommendedName>
        <fullName>Mitochondrial inner membrane protein OXA1L</fullName>
    </recommendedName>
    <alternativeName>
        <fullName>Oxidase assembly 1-like protein</fullName>
        <shortName>OXA1-like protein</shortName>
    </alternativeName>
</protein>